<organism>
    <name type="scientific">Shewanella amazonensis (strain ATCC BAA-1098 / SB2B)</name>
    <dbReference type="NCBI Taxonomy" id="326297"/>
    <lineage>
        <taxon>Bacteria</taxon>
        <taxon>Pseudomonadati</taxon>
        <taxon>Pseudomonadota</taxon>
        <taxon>Gammaproteobacteria</taxon>
        <taxon>Alteromonadales</taxon>
        <taxon>Shewanellaceae</taxon>
        <taxon>Shewanella</taxon>
    </lineage>
</organism>
<reference key="1">
    <citation type="submission" date="2006-12" db="EMBL/GenBank/DDBJ databases">
        <title>Complete sequence of Shewanella amazonensis SB2B.</title>
        <authorList>
            <consortium name="US DOE Joint Genome Institute"/>
            <person name="Copeland A."/>
            <person name="Lucas S."/>
            <person name="Lapidus A."/>
            <person name="Barry K."/>
            <person name="Detter J.C."/>
            <person name="Glavina del Rio T."/>
            <person name="Hammon N."/>
            <person name="Israni S."/>
            <person name="Dalin E."/>
            <person name="Tice H."/>
            <person name="Pitluck S."/>
            <person name="Munk A.C."/>
            <person name="Brettin T."/>
            <person name="Bruce D."/>
            <person name="Han C."/>
            <person name="Tapia R."/>
            <person name="Gilna P."/>
            <person name="Schmutz J."/>
            <person name="Larimer F."/>
            <person name="Land M."/>
            <person name="Hauser L."/>
            <person name="Kyrpides N."/>
            <person name="Mikhailova N."/>
            <person name="Fredrickson J."/>
            <person name="Richardson P."/>
        </authorList>
    </citation>
    <scope>NUCLEOTIDE SEQUENCE [LARGE SCALE GENOMIC DNA]</scope>
    <source>
        <strain>ATCC BAA-1098 / SB2B</strain>
    </source>
</reference>
<sequence>MGENKTGDGGKLLYCSFCGKSQHEVRKLIAGPSVYVCDECVELCNDIIREEIKEISPKRDQDKLPTPHELRAHLDDYVIGQEKAKKVLSVAVYNHYKRLRNAGPKDGVELGKSNILLIGPTGSGKTLLAETLARFLNVPFTMADATTLTEAGYVGEDVENIIQKLLQKCDYDVEKAQRGIVYIDEIDKISRKSDNPSITRDVSGEGVQQALLKLIEGTVAAVPPQGGRKHPQQEFLQVDTSKILFICGGAFAGLEKVIEQRTHTGSGIGFGAQVKGKEEKESMSDILSQVEPEDLVKYGLIPEFIGRLPVVATLAELDEDALIQILSEPKNALTKQYAALFEMENVELEFREDALKAIAQKAMSRKTGARGLRSIVEGILLDTMYDLPSQQGVSKAVVDESVVKGESAPILIYEQTESQAASGDQ</sequence>
<feature type="chain" id="PRO_1000024649" description="ATP-dependent Clp protease ATP-binding subunit ClpX">
    <location>
        <begin position="1"/>
        <end position="425"/>
    </location>
</feature>
<feature type="domain" description="ClpX-type ZB" evidence="2">
    <location>
        <begin position="3"/>
        <end position="56"/>
    </location>
</feature>
<feature type="binding site" evidence="2">
    <location>
        <position position="15"/>
    </location>
    <ligand>
        <name>Zn(2+)</name>
        <dbReference type="ChEBI" id="CHEBI:29105"/>
    </ligand>
</feature>
<feature type="binding site" evidence="2">
    <location>
        <position position="18"/>
    </location>
    <ligand>
        <name>Zn(2+)</name>
        <dbReference type="ChEBI" id="CHEBI:29105"/>
    </ligand>
</feature>
<feature type="binding site" evidence="2">
    <location>
        <position position="37"/>
    </location>
    <ligand>
        <name>Zn(2+)</name>
        <dbReference type="ChEBI" id="CHEBI:29105"/>
    </ligand>
</feature>
<feature type="binding site" evidence="2">
    <location>
        <position position="40"/>
    </location>
    <ligand>
        <name>Zn(2+)</name>
        <dbReference type="ChEBI" id="CHEBI:29105"/>
    </ligand>
</feature>
<feature type="binding site" evidence="1">
    <location>
        <begin position="120"/>
        <end position="127"/>
    </location>
    <ligand>
        <name>ATP</name>
        <dbReference type="ChEBI" id="CHEBI:30616"/>
    </ligand>
</feature>
<proteinExistence type="inferred from homology"/>
<protein>
    <recommendedName>
        <fullName evidence="1">ATP-dependent Clp protease ATP-binding subunit ClpX</fullName>
    </recommendedName>
</protein>
<gene>
    <name evidence="1" type="primary">clpX</name>
    <name type="ordered locus">Sama_1225</name>
</gene>
<comment type="function">
    <text evidence="1">ATP-dependent specificity component of the Clp protease. It directs the protease to specific substrates. Can perform chaperone functions in the absence of ClpP.</text>
</comment>
<comment type="subunit">
    <text evidence="1">Component of the ClpX-ClpP complex. Forms a hexameric ring that, in the presence of ATP, binds to fourteen ClpP subunits assembled into a disk-like structure with a central cavity, resembling the structure of eukaryotic proteasomes.</text>
</comment>
<comment type="similarity">
    <text evidence="1">Belongs to the ClpX chaperone family.</text>
</comment>
<dbReference type="EMBL" id="CP000507">
    <property type="protein sequence ID" value="ABL99432.1"/>
    <property type="molecule type" value="Genomic_DNA"/>
</dbReference>
<dbReference type="RefSeq" id="WP_011759341.1">
    <property type="nucleotide sequence ID" value="NC_008700.1"/>
</dbReference>
<dbReference type="SMR" id="A1S4X6"/>
<dbReference type="STRING" id="326297.Sama_1225"/>
<dbReference type="KEGG" id="saz:Sama_1225"/>
<dbReference type="eggNOG" id="COG1219">
    <property type="taxonomic scope" value="Bacteria"/>
</dbReference>
<dbReference type="HOGENOM" id="CLU_014218_8_2_6"/>
<dbReference type="OrthoDB" id="9804062at2"/>
<dbReference type="Proteomes" id="UP000009175">
    <property type="component" value="Chromosome"/>
</dbReference>
<dbReference type="GO" id="GO:0009376">
    <property type="term" value="C:HslUV protease complex"/>
    <property type="evidence" value="ECO:0007669"/>
    <property type="project" value="TreeGrafter"/>
</dbReference>
<dbReference type="GO" id="GO:0005524">
    <property type="term" value="F:ATP binding"/>
    <property type="evidence" value="ECO:0007669"/>
    <property type="project" value="UniProtKB-UniRule"/>
</dbReference>
<dbReference type="GO" id="GO:0016887">
    <property type="term" value="F:ATP hydrolysis activity"/>
    <property type="evidence" value="ECO:0007669"/>
    <property type="project" value="InterPro"/>
</dbReference>
<dbReference type="GO" id="GO:0140662">
    <property type="term" value="F:ATP-dependent protein folding chaperone"/>
    <property type="evidence" value="ECO:0007669"/>
    <property type="project" value="InterPro"/>
</dbReference>
<dbReference type="GO" id="GO:0046983">
    <property type="term" value="F:protein dimerization activity"/>
    <property type="evidence" value="ECO:0007669"/>
    <property type="project" value="InterPro"/>
</dbReference>
<dbReference type="GO" id="GO:0051082">
    <property type="term" value="F:unfolded protein binding"/>
    <property type="evidence" value="ECO:0007669"/>
    <property type="project" value="UniProtKB-UniRule"/>
</dbReference>
<dbReference type="GO" id="GO:0008270">
    <property type="term" value="F:zinc ion binding"/>
    <property type="evidence" value="ECO:0007669"/>
    <property type="project" value="InterPro"/>
</dbReference>
<dbReference type="GO" id="GO:0051301">
    <property type="term" value="P:cell division"/>
    <property type="evidence" value="ECO:0007669"/>
    <property type="project" value="TreeGrafter"/>
</dbReference>
<dbReference type="GO" id="GO:0051603">
    <property type="term" value="P:proteolysis involved in protein catabolic process"/>
    <property type="evidence" value="ECO:0007669"/>
    <property type="project" value="TreeGrafter"/>
</dbReference>
<dbReference type="CDD" id="cd19497">
    <property type="entry name" value="RecA-like_ClpX"/>
    <property type="match status" value="1"/>
</dbReference>
<dbReference type="FunFam" id="1.10.8.60:FF:000002">
    <property type="entry name" value="ATP-dependent Clp protease ATP-binding subunit ClpX"/>
    <property type="match status" value="1"/>
</dbReference>
<dbReference type="FunFam" id="3.40.50.300:FF:000005">
    <property type="entry name" value="ATP-dependent Clp protease ATP-binding subunit ClpX"/>
    <property type="match status" value="1"/>
</dbReference>
<dbReference type="Gene3D" id="1.10.8.60">
    <property type="match status" value="1"/>
</dbReference>
<dbReference type="Gene3D" id="6.20.220.10">
    <property type="entry name" value="ClpX chaperone, C4-type zinc finger domain"/>
    <property type="match status" value="1"/>
</dbReference>
<dbReference type="Gene3D" id="3.40.50.300">
    <property type="entry name" value="P-loop containing nucleotide triphosphate hydrolases"/>
    <property type="match status" value="1"/>
</dbReference>
<dbReference type="HAMAP" id="MF_00175">
    <property type="entry name" value="ClpX"/>
    <property type="match status" value="1"/>
</dbReference>
<dbReference type="InterPro" id="IPR003593">
    <property type="entry name" value="AAA+_ATPase"/>
</dbReference>
<dbReference type="InterPro" id="IPR050052">
    <property type="entry name" value="ATP-dep_Clp_protease_ClpX"/>
</dbReference>
<dbReference type="InterPro" id="IPR003959">
    <property type="entry name" value="ATPase_AAA_core"/>
</dbReference>
<dbReference type="InterPro" id="IPR019489">
    <property type="entry name" value="Clp_ATPase_C"/>
</dbReference>
<dbReference type="InterPro" id="IPR004487">
    <property type="entry name" value="Clp_protease_ATP-bd_su_ClpX"/>
</dbReference>
<dbReference type="InterPro" id="IPR046425">
    <property type="entry name" value="ClpX_bact"/>
</dbReference>
<dbReference type="InterPro" id="IPR027417">
    <property type="entry name" value="P-loop_NTPase"/>
</dbReference>
<dbReference type="InterPro" id="IPR010603">
    <property type="entry name" value="Znf_CppX_C4"/>
</dbReference>
<dbReference type="InterPro" id="IPR038366">
    <property type="entry name" value="Znf_CppX_C4_sf"/>
</dbReference>
<dbReference type="NCBIfam" id="TIGR00382">
    <property type="entry name" value="clpX"/>
    <property type="match status" value="1"/>
</dbReference>
<dbReference type="NCBIfam" id="NF003745">
    <property type="entry name" value="PRK05342.1"/>
    <property type="match status" value="1"/>
</dbReference>
<dbReference type="PANTHER" id="PTHR48102:SF7">
    <property type="entry name" value="ATP-DEPENDENT CLP PROTEASE ATP-BINDING SUBUNIT CLPX-LIKE, MITOCHONDRIAL"/>
    <property type="match status" value="1"/>
</dbReference>
<dbReference type="PANTHER" id="PTHR48102">
    <property type="entry name" value="ATP-DEPENDENT CLP PROTEASE ATP-BINDING SUBUNIT CLPX-LIKE, MITOCHONDRIAL-RELATED"/>
    <property type="match status" value="1"/>
</dbReference>
<dbReference type="Pfam" id="PF07724">
    <property type="entry name" value="AAA_2"/>
    <property type="match status" value="1"/>
</dbReference>
<dbReference type="Pfam" id="PF10431">
    <property type="entry name" value="ClpB_D2-small"/>
    <property type="match status" value="1"/>
</dbReference>
<dbReference type="Pfam" id="PF06689">
    <property type="entry name" value="zf-C4_ClpX"/>
    <property type="match status" value="1"/>
</dbReference>
<dbReference type="SMART" id="SM00382">
    <property type="entry name" value="AAA"/>
    <property type="match status" value="1"/>
</dbReference>
<dbReference type="SMART" id="SM01086">
    <property type="entry name" value="ClpB_D2-small"/>
    <property type="match status" value="1"/>
</dbReference>
<dbReference type="SMART" id="SM00994">
    <property type="entry name" value="zf-C4_ClpX"/>
    <property type="match status" value="1"/>
</dbReference>
<dbReference type="SUPFAM" id="SSF57716">
    <property type="entry name" value="Glucocorticoid receptor-like (DNA-binding domain)"/>
    <property type="match status" value="1"/>
</dbReference>
<dbReference type="SUPFAM" id="SSF52540">
    <property type="entry name" value="P-loop containing nucleoside triphosphate hydrolases"/>
    <property type="match status" value="1"/>
</dbReference>
<dbReference type="PROSITE" id="PS51902">
    <property type="entry name" value="CLPX_ZB"/>
    <property type="match status" value="1"/>
</dbReference>
<name>CLPX_SHEAM</name>
<accession>A1S4X6</accession>
<evidence type="ECO:0000255" key="1">
    <source>
        <dbReference type="HAMAP-Rule" id="MF_00175"/>
    </source>
</evidence>
<evidence type="ECO:0000255" key="2">
    <source>
        <dbReference type="PROSITE-ProRule" id="PRU01250"/>
    </source>
</evidence>
<keyword id="KW-0067">ATP-binding</keyword>
<keyword id="KW-0143">Chaperone</keyword>
<keyword id="KW-0479">Metal-binding</keyword>
<keyword id="KW-0547">Nucleotide-binding</keyword>
<keyword id="KW-1185">Reference proteome</keyword>
<keyword id="KW-0862">Zinc</keyword>